<organism>
    <name type="scientific">Rickettsia rickettsii (strain Sheila Smith)</name>
    <dbReference type="NCBI Taxonomy" id="392021"/>
    <lineage>
        <taxon>Bacteria</taxon>
        <taxon>Pseudomonadati</taxon>
        <taxon>Pseudomonadota</taxon>
        <taxon>Alphaproteobacteria</taxon>
        <taxon>Rickettsiales</taxon>
        <taxon>Rickettsiaceae</taxon>
        <taxon>Rickettsieae</taxon>
        <taxon>Rickettsia</taxon>
        <taxon>spotted fever group</taxon>
    </lineage>
</organism>
<feature type="chain" id="PRO_1000019801" description="Serine--tRNA ligase">
    <location>
        <begin position="1"/>
        <end position="425"/>
    </location>
</feature>
<feature type="binding site" evidence="1">
    <location>
        <begin position="228"/>
        <end position="230"/>
    </location>
    <ligand>
        <name>L-serine</name>
        <dbReference type="ChEBI" id="CHEBI:33384"/>
    </ligand>
</feature>
<feature type="binding site" evidence="1">
    <location>
        <begin position="259"/>
        <end position="261"/>
    </location>
    <ligand>
        <name>ATP</name>
        <dbReference type="ChEBI" id="CHEBI:30616"/>
    </ligand>
</feature>
<feature type="binding site" evidence="1">
    <location>
        <position position="282"/>
    </location>
    <ligand>
        <name>L-serine</name>
        <dbReference type="ChEBI" id="CHEBI:33384"/>
    </ligand>
</feature>
<feature type="binding site" evidence="1">
    <location>
        <begin position="346"/>
        <end position="349"/>
    </location>
    <ligand>
        <name>ATP</name>
        <dbReference type="ChEBI" id="CHEBI:30616"/>
    </ligand>
</feature>
<feature type="binding site" evidence="1">
    <location>
        <position position="382"/>
    </location>
    <ligand>
        <name>L-serine</name>
        <dbReference type="ChEBI" id="CHEBI:33384"/>
    </ligand>
</feature>
<dbReference type="EC" id="6.1.1.11" evidence="1"/>
<dbReference type="EMBL" id="CP000848">
    <property type="protein sequence ID" value="ABV76782.1"/>
    <property type="molecule type" value="Genomic_DNA"/>
</dbReference>
<dbReference type="RefSeq" id="WP_012151326.1">
    <property type="nucleotide sequence ID" value="NZ_CP121767.1"/>
</dbReference>
<dbReference type="SMR" id="A8GTQ7"/>
<dbReference type="GeneID" id="79937828"/>
<dbReference type="KEGG" id="rri:A1G_06665"/>
<dbReference type="HOGENOM" id="CLU_023797_1_1_5"/>
<dbReference type="UniPathway" id="UPA00906">
    <property type="reaction ID" value="UER00895"/>
</dbReference>
<dbReference type="Proteomes" id="UP000006832">
    <property type="component" value="Chromosome"/>
</dbReference>
<dbReference type="GO" id="GO:0005737">
    <property type="term" value="C:cytoplasm"/>
    <property type="evidence" value="ECO:0007669"/>
    <property type="project" value="UniProtKB-SubCell"/>
</dbReference>
<dbReference type="GO" id="GO:0005524">
    <property type="term" value="F:ATP binding"/>
    <property type="evidence" value="ECO:0007669"/>
    <property type="project" value="UniProtKB-UniRule"/>
</dbReference>
<dbReference type="GO" id="GO:0004828">
    <property type="term" value="F:serine-tRNA ligase activity"/>
    <property type="evidence" value="ECO:0007669"/>
    <property type="project" value="UniProtKB-UniRule"/>
</dbReference>
<dbReference type="GO" id="GO:0016260">
    <property type="term" value="P:selenocysteine biosynthetic process"/>
    <property type="evidence" value="ECO:0007669"/>
    <property type="project" value="UniProtKB-UniRule"/>
</dbReference>
<dbReference type="GO" id="GO:0006434">
    <property type="term" value="P:seryl-tRNA aminoacylation"/>
    <property type="evidence" value="ECO:0007669"/>
    <property type="project" value="UniProtKB-UniRule"/>
</dbReference>
<dbReference type="CDD" id="cd00770">
    <property type="entry name" value="SerRS_core"/>
    <property type="match status" value="1"/>
</dbReference>
<dbReference type="Gene3D" id="3.30.930.10">
    <property type="entry name" value="Bira Bifunctional Protein, Domain 2"/>
    <property type="match status" value="1"/>
</dbReference>
<dbReference type="Gene3D" id="1.10.287.40">
    <property type="entry name" value="Serine-tRNA synthetase, tRNA binding domain"/>
    <property type="match status" value="1"/>
</dbReference>
<dbReference type="HAMAP" id="MF_00176">
    <property type="entry name" value="Ser_tRNA_synth_type1"/>
    <property type="match status" value="1"/>
</dbReference>
<dbReference type="InterPro" id="IPR002314">
    <property type="entry name" value="aa-tRNA-synt_IIb"/>
</dbReference>
<dbReference type="InterPro" id="IPR006195">
    <property type="entry name" value="aa-tRNA-synth_II"/>
</dbReference>
<dbReference type="InterPro" id="IPR045864">
    <property type="entry name" value="aa-tRNA-synth_II/BPL/LPL"/>
</dbReference>
<dbReference type="InterPro" id="IPR002317">
    <property type="entry name" value="Ser-tRNA-ligase_type_1"/>
</dbReference>
<dbReference type="InterPro" id="IPR015866">
    <property type="entry name" value="Ser-tRNA-synth_1_N"/>
</dbReference>
<dbReference type="InterPro" id="IPR042103">
    <property type="entry name" value="SerRS_1_N_sf"/>
</dbReference>
<dbReference type="InterPro" id="IPR033729">
    <property type="entry name" value="SerRS_core"/>
</dbReference>
<dbReference type="InterPro" id="IPR010978">
    <property type="entry name" value="tRNA-bd_arm"/>
</dbReference>
<dbReference type="NCBIfam" id="TIGR00414">
    <property type="entry name" value="serS"/>
    <property type="match status" value="1"/>
</dbReference>
<dbReference type="PANTHER" id="PTHR43697:SF1">
    <property type="entry name" value="SERINE--TRNA LIGASE"/>
    <property type="match status" value="1"/>
</dbReference>
<dbReference type="PANTHER" id="PTHR43697">
    <property type="entry name" value="SERYL-TRNA SYNTHETASE"/>
    <property type="match status" value="1"/>
</dbReference>
<dbReference type="Pfam" id="PF02403">
    <property type="entry name" value="Seryl_tRNA_N"/>
    <property type="match status" value="1"/>
</dbReference>
<dbReference type="Pfam" id="PF00587">
    <property type="entry name" value="tRNA-synt_2b"/>
    <property type="match status" value="1"/>
</dbReference>
<dbReference type="PIRSF" id="PIRSF001529">
    <property type="entry name" value="Ser-tRNA-synth_IIa"/>
    <property type="match status" value="1"/>
</dbReference>
<dbReference type="PRINTS" id="PR00981">
    <property type="entry name" value="TRNASYNTHSER"/>
</dbReference>
<dbReference type="SUPFAM" id="SSF55681">
    <property type="entry name" value="Class II aaRS and biotin synthetases"/>
    <property type="match status" value="1"/>
</dbReference>
<dbReference type="SUPFAM" id="SSF46589">
    <property type="entry name" value="tRNA-binding arm"/>
    <property type="match status" value="1"/>
</dbReference>
<dbReference type="PROSITE" id="PS50862">
    <property type="entry name" value="AA_TRNA_LIGASE_II"/>
    <property type="match status" value="1"/>
</dbReference>
<keyword id="KW-0030">Aminoacyl-tRNA synthetase</keyword>
<keyword id="KW-0067">ATP-binding</keyword>
<keyword id="KW-0963">Cytoplasm</keyword>
<keyword id="KW-0436">Ligase</keyword>
<keyword id="KW-0547">Nucleotide-binding</keyword>
<keyword id="KW-0648">Protein biosynthesis</keyword>
<comment type="function">
    <text evidence="1">Catalyzes the attachment of serine to tRNA(Ser). Is also able to aminoacylate tRNA(Sec) with serine, to form the misacylated tRNA L-seryl-tRNA(Sec), which will be further converted into selenocysteinyl-tRNA(Sec).</text>
</comment>
<comment type="catalytic activity">
    <reaction evidence="1">
        <text>tRNA(Ser) + L-serine + ATP = L-seryl-tRNA(Ser) + AMP + diphosphate + H(+)</text>
        <dbReference type="Rhea" id="RHEA:12292"/>
        <dbReference type="Rhea" id="RHEA-COMP:9669"/>
        <dbReference type="Rhea" id="RHEA-COMP:9703"/>
        <dbReference type="ChEBI" id="CHEBI:15378"/>
        <dbReference type="ChEBI" id="CHEBI:30616"/>
        <dbReference type="ChEBI" id="CHEBI:33019"/>
        <dbReference type="ChEBI" id="CHEBI:33384"/>
        <dbReference type="ChEBI" id="CHEBI:78442"/>
        <dbReference type="ChEBI" id="CHEBI:78533"/>
        <dbReference type="ChEBI" id="CHEBI:456215"/>
        <dbReference type="EC" id="6.1.1.11"/>
    </reaction>
</comment>
<comment type="catalytic activity">
    <reaction evidence="1">
        <text>tRNA(Sec) + L-serine + ATP = L-seryl-tRNA(Sec) + AMP + diphosphate + H(+)</text>
        <dbReference type="Rhea" id="RHEA:42580"/>
        <dbReference type="Rhea" id="RHEA-COMP:9742"/>
        <dbReference type="Rhea" id="RHEA-COMP:10128"/>
        <dbReference type="ChEBI" id="CHEBI:15378"/>
        <dbReference type="ChEBI" id="CHEBI:30616"/>
        <dbReference type="ChEBI" id="CHEBI:33019"/>
        <dbReference type="ChEBI" id="CHEBI:33384"/>
        <dbReference type="ChEBI" id="CHEBI:78442"/>
        <dbReference type="ChEBI" id="CHEBI:78533"/>
        <dbReference type="ChEBI" id="CHEBI:456215"/>
        <dbReference type="EC" id="6.1.1.11"/>
    </reaction>
</comment>
<comment type="pathway">
    <text evidence="1">Aminoacyl-tRNA biosynthesis; selenocysteinyl-tRNA(Sec) biosynthesis; L-seryl-tRNA(Sec) from L-serine and tRNA(Sec): step 1/1.</text>
</comment>
<comment type="subunit">
    <text evidence="1">Homodimer. The tRNA molecule binds across the dimer.</text>
</comment>
<comment type="subcellular location">
    <subcellularLocation>
        <location evidence="1">Cytoplasm</location>
    </subcellularLocation>
</comment>
<comment type="domain">
    <text evidence="1">Consists of two distinct domains, a catalytic core and a N-terminal extension that is involved in tRNA binding.</text>
</comment>
<comment type="similarity">
    <text evidence="1">Belongs to the class-II aminoacyl-tRNA synthetase family. Type-1 seryl-tRNA synthetase subfamily.</text>
</comment>
<protein>
    <recommendedName>
        <fullName evidence="1">Serine--tRNA ligase</fullName>
        <ecNumber evidence="1">6.1.1.11</ecNumber>
    </recommendedName>
    <alternativeName>
        <fullName evidence="1">Seryl-tRNA synthetase</fullName>
        <shortName evidence="1">SerRS</shortName>
    </alternativeName>
    <alternativeName>
        <fullName evidence="1">Seryl-tRNA(Ser/Sec) synthetase</fullName>
    </alternativeName>
</protein>
<reference key="1">
    <citation type="submission" date="2007-09" db="EMBL/GenBank/DDBJ databases">
        <title>Complete genome sequence of Rickettsia rickettsii.</title>
        <authorList>
            <person name="Madan A."/>
            <person name="Fahey J."/>
            <person name="Helton E."/>
            <person name="Ketteman M."/>
            <person name="Madan A."/>
            <person name="Rodrigues S."/>
            <person name="Sanchez A."/>
            <person name="Dasch G."/>
            <person name="Eremeeva M."/>
        </authorList>
    </citation>
    <scope>NUCLEOTIDE SEQUENCE [LARGE SCALE GENOMIC DNA]</scope>
    <source>
        <strain>Sheila Smith</strain>
    </source>
</reference>
<accession>A8GTQ7</accession>
<gene>
    <name evidence="1" type="primary">serS</name>
    <name type="ordered locus">A1G_06665</name>
</gene>
<sequence length="425" mass="48399">MLNIKWIRENKELFDEKLSQRFIEPMSSKIAMLDGEKRKITSLIQELQHARKVKSKILGNMASKSGEEFEGLQRDVKHINEKLEALEHDLNNNNELNELLNMFPNIPDEEVPYGMDASMNKLVRTYGETNPNALNKQHFELGIKLNLMDFEQTAKISGTKFVTLKGDLAKLERALINFMIDVHTKEWDFFEISPPVLVRDNAMYNAGQLPKFAEESFATTNGYRLIPTAEVSLVNMVADTIIPREKLPIRYVAYTQCFRSEAGSSGRDTRGMIRLHQFGKVELVSITTPEESTNEHEYITNASETILQKLNLPYRVMLLCTGDMGFAAKKTYDIEVWLPGQKQYREIASCSNCGDFQARRMKARYKEFGSNETTLVHTLNASGLPIGRTMVAILENYQNEDGSITIPDVLINYMGGLQKIIAYSE</sequence>
<evidence type="ECO:0000255" key="1">
    <source>
        <dbReference type="HAMAP-Rule" id="MF_00176"/>
    </source>
</evidence>
<proteinExistence type="inferred from homology"/>
<name>SYS_RICRS</name>